<proteinExistence type="inferred from homology"/>
<protein>
    <recommendedName>
        <fullName evidence="1">Probable Fe(2+)-trafficking protein</fullName>
    </recommendedName>
</protein>
<reference key="1">
    <citation type="journal article" date="2009" name="Infect. Immun.">
        <title>Comparative genomics reveal extensive transposon-mediated genomic plasticity and diversity among potential effector proteins within the genus Coxiella.</title>
        <authorList>
            <person name="Beare P.A."/>
            <person name="Unsworth N."/>
            <person name="Andoh M."/>
            <person name="Voth D.E."/>
            <person name="Omsland A."/>
            <person name="Gilk S.D."/>
            <person name="Williams K.P."/>
            <person name="Sobral B.W."/>
            <person name="Kupko J.J. III"/>
            <person name="Porcella S.F."/>
            <person name="Samuel J.E."/>
            <person name="Heinzen R.A."/>
        </authorList>
    </citation>
    <scope>NUCLEOTIDE SEQUENCE [LARGE SCALE GENOMIC DNA]</scope>
    <source>
        <strain>CbuK_Q154</strain>
    </source>
</reference>
<feature type="chain" id="PRO_1000131835" description="Probable Fe(2+)-trafficking protein">
    <location>
        <begin position="1"/>
        <end position="90"/>
    </location>
</feature>
<organism>
    <name type="scientific">Coxiella burnetii (strain CbuK_Q154)</name>
    <name type="common">Coxiella burnetii (strain Q154)</name>
    <dbReference type="NCBI Taxonomy" id="434924"/>
    <lineage>
        <taxon>Bacteria</taxon>
        <taxon>Pseudomonadati</taxon>
        <taxon>Pseudomonadota</taxon>
        <taxon>Gammaproteobacteria</taxon>
        <taxon>Legionellales</taxon>
        <taxon>Coxiellaceae</taxon>
        <taxon>Coxiella</taxon>
    </lineage>
</organism>
<evidence type="ECO:0000255" key="1">
    <source>
        <dbReference type="HAMAP-Rule" id="MF_00686"/>
    </source>
</evidence>
<gene>
    <name type="ordered locus">CbuK_0895</name>
</gene>
<sequence length="90" mass="10482">MTRRIICQKLGKEADALNYSPYPGELGERIYNHISEQAWQAWLSHQTMLINEYRLSLIDPKARQFLEQEMINFLFGTGSEKPAGYTSEKE</sequence>
<comment type="function">
    <text evidence="1">Could be a mediator in iron transactions between iron acquisition and iron-requiring processes, such as synthesis and/or repair of Fe-S clusters in biosynthetic enzymes.</text>
</comment>
<comment type="similarity">
    <text evidence="1">Belongs to the Fe(2+)-trafficking protein family.</text>
</comment>
<dbReference type="EMBL" id="CP001020">
    <property type="protein sequence ID" value="ACJ20124.1"/>
    <property type="molecule type" value="Genomic_DNA"/>
</dbReference>
<dbReference type="RefSeq" id="WP_005768500.1">
    <property type="nucleotide sequence ID" value="NC_011528.1"/>
</dbReference>
<dbReference type="SMR" id="B6J775"/>
<dbReference type="KEGG" id="cbc:CbuK_0895"/>
<dbReference type="HOGENOM" id="CLU_170994_0_0_6"/>
<dbReference type="GO" id="GO:0005829">
    <property type="term" value="C:cytosol"/>
    <property type="evidence" value="ECO:0007669"/>
    <property type="project" value="TreeGrafter"/>
</dbReference>
<dbReference type="GO" id="GO:0005506">
    <property type="term" value="F:iron ion binding"/>
    <property type="evidence" value="ECO:0007669"/>
    <property type="project" value="UniProtKB-UniRule"/>
</dbReference>
<dbReference type="GO" id="GO:0034599">
    <property type="term" value="P:cellular response to oxidative stress"/>
    <property type="evidence" value="ECO:0007669"/>
    <property type="project" value="TreeGrafter"/>
</dbReference>
<dbReference type="FunFam" id="1.10.3880.10:FF:000001">
    <property type="entry name" value="Probable Fe(2+)-trafficking protein"/>
    <property type="match status" value="1"/>
</dbReference>
<dbReference type="Gene3D" id="1.10.3880.10">
    <property type="entry name" value="Fe(II) trafficking protein YggX"/>
    <property type="match status" value="1"/>
</dbReference>
<dbReference type="HAMAP" id="MF_00686">
    <property type="entry name" value="Fe_traffic_YggX"/>
    <property type="match status" value="1"/>
</dbReference>
<dbReference type="InterPro" id="IPR007457">
    <property type="entry name" value="Fe_traffick_prot_YggX"/>
</dbReference>
<dbReference type="InterPro" id="IPR036766">
    <property type="entry name" value="Fe_traffick_prot_YggX_sf"/>
</dbReference>
<dbReference type="NCBIfam" id="NF003817">
    <property type="entry name" value="PRK05408.1"/>
    <property type="match status" value="1"/>
</dbReference>
<dbReference type="PANTHER" id="PTHR36965">
    <property type="entry name" value="FE(2+)-TRAFFICKING PROTEIN-RELATED"/>
    <property type="match status" value="1"/>
</dbReference>
<dbReference type="PANTHER" id="PTHR36965:SF1">
    <property type="entry name" value="FE(2+)-TRAFFICKING PROTEIN-RELATED"/>
    <property type="match status" value="1"/>
</dbReference>
<dbReference type="Pfam" id="PF04362">
    <property type="entry name" value="Iron_traffic"/>
    <property type="match status" value="1"/>
</dbReference>
<dbReference type="PIRSF" id="PIRSF029827">
    <property type="entry name" value="Fe_traffic_YggX"/>
    <property type="match status" value="1"/>
</dbReference>
<dbReference type="SUPFAM" id="SSF111148">
    <property type="entry name" value="YggX-like"/>
    <property type="match status" value="1"/>
</dbReference>
<keyword id="KW-0408">Iron</keyword>
<accession>B6J775</accession>
<name>FETP_COXB1</name>